<sequence>MKLVFYGAGNMAQAIFTGIINSSNLDANDIYLTNKSNEQALKAFAEKLGVNYSYDDATLLKDADYVFLGTKPHDFDALATRIKPHITKDNCFISIMAGIPIDYIKQQLECQNPVARIMPNTNAQVGHSVTGISFSNNFDPKSKDEINDLVKAFGSVIEVSEDHLHQVTAITGSGPAFLYHVFEQYVKAGTKLGLEKEQVEESIRNLIIGTSKMIERSDLSMAQLRKNITSKGGTTQAGLDTLSQYDLVSIFEDCLNAAVDRSIELSNVEDQ</sequence>
<comment type="function">
    <text evidence="1">Catalyzes the reduction of 1-pyrroline-5-carboxylate (PCA) to L-proline.</text>
</comment>
<comment type="catalytic activity">
    <reaction evidence="1">
        <text>L-proline + NADP(+) = (S)-1-pyrroline-5-carboxylate + NADPH + 2 H(+)</text>
        <dbReference type="Rhea" id="RHEA:14109"/>
        <dbReference type="ChEBI" id="CHEBI:15378"/>
        <dbReference type="ChEBI" id="CHEBI:17388"/>
        <dbReference type="ChEBI" id="CHEBI:57783"/>
        <dbReference type="ChEBI" id="CHEBI:58349"/>
        <dbReference type="ChEBI" id="CHEBI:60039"/>
        <dbReference type="EC" id="1.5.1.2"/>
    </reaction>
</comment>
<comment type="catalytic activity">
    <reaction evidence="1">
        <text>L-proline + NAD(+) = (S)-1-pyrroline-5-carboxylate + NADH + 2 H(+)</text>
        <dbReference type="Rhea" id="RHEA:14105"/>
        <dbReference type="ChEBI" id="CHEBI:15378"/>
        <dbReference type="ChEBI" id="CHEBI:17388"/>
        <dbReference type="ChEBI" id="CHEBI:57540"/>
        <dbReference type="ChEBI" id="CHEBI:57945"/>
        <dbReference type="ChEBI" id="CHEBI:60039"/>
        <dbReference type="EC" id="1.5.1.2"/>
    </reaction>
</comment>
<comment type="pathway">
    <text evidence="1">Amino-acid biosynthesis; L-proline biosynthesis; L-proline from L-glutamate 5-semialdehyde: step 1/1.</text>
</comment>
<comment type="subcellular location">
    <subcellularLocation>
        <location evidence="1">Cytoplasm</location>
    </subcellularLocation>
</comment>
<comment type="similarity">
    <text evidence="1">Belongs to the pyrroline-5-carboxylate reductase family.</text>
</comment>
<keyword id="KW-0028">Amino-acid biosynthesis</keyword>
<keyword id="KW-0963">Cytoplasm</keyword>
<keyword id="KW-0521">NADP</keyword>
<keyword id="KW-0560">Oxidoreductase</keyword>
<keyword id="KW-0641">Proline biosynthesis</keyword>
<proteinExistence type="evidence at protein level"/>
<reference key="1">
    <citation type="journal article" date="2001" name="Lancet">
        <title>Whole genome sequencing of meticillin-resistant Staphylococcus aureus.</title>
        <authorList>
            <person name="Kuroda M."/>
            <person name="Ohta T."/>
            <person name="Uchiyama I."/>
            <person name="Baba T."/>
            <person name="Yuzawa H."/>
            <person name="Kobayashi I."/>
            <person name="Cui L."/>
            <person name="Oguchi A."/>
            <person name="Aoki K."/>
            <person name="Nagai Y."/>
            <person name="Lian J.-Q."/>
            <person name="Ito T."/>
            <person name="Kanamori M."/>
            <person name="Matsumaru H."/>
            <person name="Maruyama A."/>
            <person name="Murakami H."/>
            <person name="Hosoyama A."/>
            <person name="Mizutani-Ui Y."/>
            <person name="Takahashi N.K."/>
            <person name="Sawano T."/>
            <person name="Inoue R."/>
            <person name="Kaito C."/>
            <person name="Sekimizu K."/>
            <person name="Hirakawa H."/>
            <person name="Kuhara S."/>
            <person name="Goto S."/>
            <person name="Yabuzaki J."/>
            <person name="Kanehisa M."/>
            <person name="Yamashita A."/>
            <person name="Oshima K."/>
            <person name="Furuya K."/>
            <person name="Yoshino C."/>
            <person name="Shiba T."/>
            <person name="Hattori M."/>
            <person name="Ogasawara N."/>
            <person name="Hayashi H."/>
            <person name="Hiramatsu K."/>
        </authorList>
    </citation>
    <scope>NUCLEOTIDE SEQUENCE [LARGE SCALE GENOMIC DNA]</scope>
    <source>
        <strain>N315</strain>
    </source>
</reference>
<reference key="2">
    <citation type="journal article" date="2005" name="J. Microbiol. Methods">
        <title>Correlation of proteomic and transcriptomic profiles of Staphylococcus aureus during the post-exponential phase of growth.</title>
        <authorList>
            <person name="Scherl A."/>
            <person name="Francois P."/>
            <person name="Bento M."/>
            <person name="Deshusses J.M."/>
            <person name="Charbonnier Y."/>
            <person name="Converset V."/>
            <person name="Huyghe A."/>
            <person name="Walter N."/>
            <person name="Hoogland C."/>
            <person name="Appel R.D."/>
            <person name="Sanchez J.-C."/>
            <person name="Zimmermann-Ivol C.G."/>
            <person name="Corthals G.L."/>
            <person name="Hochstrasser D.F."/>
            <person name="Schrenzel J."/>
        </authorList>
    </citation>
    <scope>IDENTIFICATION BY MASS SPECTROMETRY</scope>
    <source>
        <strain>N315</strain>
    </source>
</reference>
<reference key="3">
    <citation type="submission" date="2007-10" db="UniProtKB">
        <title>Shotgun proteomic analysis of total and membrane protein extracts of S. aureus strain N315.</title>
        <authorList>
            <person name="Vaezzadeh A.R."/>
            <person name="Deshusses J."/>
            <person name="Lescuyer P."/>
            <person name="Hochstrasser D.F."/>
        </authorList>
    </citation>
    <scope>IDENTIFICATION BY MASS SPECTROMETRY [LARGE SCALE ANALYSIS]</scope>
    <source>
        <strain>N315</strain>
    </source>
</reference>
<name>P5CR_STAAN</name>
<feature type="chain" id="PRO_0000187300" description="Pyrroline-5-carboxylate reductase">
    <location>
        <begin position="1"/>
        <end position="271"/>
    </location>
</feature>
<protein>
    <recommendedName>
        <fullName evidence="1">Pyrroline-5-carboxylate reductase</fullName>
        <shortName evidence="1">P5C reductase</shortName>
        <shortName evidence="1">P5CR</shortName>
        <ecNumber evidence="1">1.5.1.2</ecNumber>
    </recommendedName>
    <alternativeName>
        <fullName evidence="1">PCA reductase</fullName>
    </alternativeName>
</protein>
<accession>Q7A5G8</accession>
<organism>
    <name type="scientific">Staphylococcus aureus (strain N315)</name>
    <dbReference type="NCBI Taxonomy" id="158879"/>
    <lineage>
        <taxon>Bacteria</taxon>
        <taxon>Bacillati</taxon>
        <taxon>Bacillota</taxon>
        <taxon>Bacilli</taxon>
        <taxon>Bacillales</taxon>
        <taxon>Staphylococcaceae</taxon>
        <taxon>Staphylococcus</taxon>
    </lineage>
</organism>
<dbReference type="EC" id="1.5.1.2" evidence="1"/>
<dbReference type="EMBL" id="BA000018">
    <property type="protein sequence ID" value="BAB42596.1"/>
    <property type="molecule type" value="Genomic_DNA"/>
</dbReference>
<dbReference type="PIR" id="G89929">
    <property type="entry name" value="G89929"/>
</dbReference>
<dbReference type="RefSeq" id="WP_000779749.1">
    <property type="nucleotide sequence ID" value="NC_002745.2"/>
</dbReference>
<dbReference type="SMR" id="Q7A5G8"/>
<dbReference type="EnsemblBacteria" id="BAB42596">
    <property type="protein sequence ID" value="BAB42596"/>
    <property type="gene ID" value="BAB42596"/>
</dbReference>
<dbReference type="KEGG" id="sau:SA1334"/>
<dbReference type="HOGENOM" id="CLU_042344_0_1_9"/>
<dbReference type="UniPathway" id="UPA00098">
    <property type="reaction ID" value="UER00361"/>
</dbReference>
<dbReference type="GO" id="GO:0005737">
    <property type="term" value="C:cytoplasm"/>
    <property type="evidence" value="ECO:0007669"/>
    <property type="project" value="UniProtKB-SubCell"/>
</dbReference>
<dbReference type="GO" id="GO:0004735">
    <property type="term" value="F:pyrroline-5-carboxylate reductase activity"/>
    <property type="evidence" value="ECO:0007669"/>
    <property type="project" value="UniProtKB-UniRule"/>
</dbReference>
<dbReference type="GO" id="GO:0055129">
    <property type="term" value="P:L-proline biosynthetic process"/>
    <property type="evidence" value="ECO:0007669"/>
    <property type="project" value="UniProtKB-UniRule"/>
</dbReference>
<dbReference type="FunFam" id="1.10.3730.10:FF:000001">
    <property type="entry name" value="Pyrroline-5-carboxylate reductase"/>
    <property type="match status" value="1"/>
</dbReference>
<dbReference type="Gene3D" id="3.40.50.720">
    <property type="entry name" value="NAD(P)-binding Rossmann-like Domain"/>
    <property type="match status" value="1"/>
</dbReference>
<dbReference type="Gene3D" id="1.10.3730.10">
    <property type="entry name" value="ProC C-terminal domain-like"/>
    <property type="match status" value="1"/>
</dbReference>
<dbReference type="HAMAP" id="MF_01925">
    <property type="entry name" value="P5C_reductase"/>
    <property type="match status" value="1"/>
</dbReference>
<dbReference type="InterPro" id="IPR008927">
    <property type="entry name" value="6-PGluconate_DH-like_C_sf"/>
</dbReference>
<dbReference type="InterPro" id="IPR036291">
    <property type="entry name" value="NAD(P)-bd_dom_sf"/>
</dbReference>
<dbReference type="InterPro" id="IPR028939">
    <property type="entry name" value="P5C_Rdtase_cat_N"/>
</dbReference>
<dbReference type="InterPro" id="IPR029036">
    <property type="entry name" value="P5CR_dimer"/>
</dbReference>
<dbReference type="InterPro" id="IPR000304">
    <property type="entry name" value="Pyrroline-COOH_reductase"/>
</dbReference>
<dbReference type="NCBIfam" id="TIGR00112">
    <property type="entry name" value="proC"/>
    <property type="match status" value="1"/>
</dbReference>
<dbReference type="PANTHER" id="PTHR11645">
    <property type="entry name" value="PYRROLINE-5-CARBOXYLATE REDUCTASE"/>
    <property type="match status" value="1"/>
</dbReference>
<dbReference type="PANTHER" id="PTHR11645:SF0">
    <property type="entry name" value="PYRROLINE-5-CARBOXYLATE REDUCTASE 3"/>
    <property type="match status" value="1"/>
</dbReference>
<dbReference type="Pfam" id="PF03807">
    <property type="entry name" value="F420_oxidored"/>
    <property type="match status" value="1"/>
</dbReference>
<dbReference type="Pfam" id="PF14748">
    <property type="entry name" value="P5CR_dimer"/>
    <property type="match status" value="1"/>
</dbReference>
<dbReference type="PIRSF" id="PIRSF000193">
    <property type="entry name" value="Pyrrol-5-carb_rd"/>
    <property type="match status" value="1"/>
</dbReference>
<dbReference type="SUPFAM" id="SSF48179">
    <property type="entry name" value="6-phosphogluconate dehydrogenase C-terminal domain-like"/>
    <property type="match status" value="1"/>
</dbReference>
<dbReference type="SUPFAM" id="SSF51735">
    <property type="entry name" value="NAD(P)-binding Rossmann-fold domains"/>
    <property type="match status" value="1"/>
</dbReference>
<evidence type="ECO:0000255" key="1">
    <source>
        <dbReference type="HAMAP-Rule" id="MF_01925"/>
    </source>
</evidence>
<gene>
    <name evidence="1" type="primary">proC</name>
    <name type="ordered locus">SA1334</name>
</gene>